<feature type="chain" id="PRO_1000128478" description="Small ribosomal subunit protein uS14">
    <location>
        <begin position="1"/>
        <end position="89"/>
    </location>
</feature>
<evidence type="ECO:0000255" key="1">
    <source>
        <dbReference type="HAMAP-Rule" id="MF_00537"/>
    </source>
</evidence>
<evidence type="ECO:0000305" key="2"/>
<gene>
    <name evidence="1" type="primary">rpsN</name>
    <name type="ordered locus">BDI_2367</name>
</gene>
<name>RS14_PARD8</name>
<sequence length="89" mass="9965">MAKESMKAREVKRAKLVAKYAAKRAQLKAEGNYEALQALPKNASPVRLHNRCKITGRPKGYVRQFGISRIQLREMASNGLIPGVKKASW</sequence>
<organism>
    <name type="scientific">Parabacteroides distasonis (strain ATCC 8503 / DSM 20701 / CIP 104284 / JCM 5825 / NCTC 11152)</name>
    <dbReference type="NCBI Taxonomy" id="435591"/>
    <lineage>
        <taxon>Bacteria</taxon>
        <taxon>Pseudomonadati</taxon>
        <taxon>Bacteroidota</taxon>
        <taxon>Bacteroidia</taxon>
        <taxon>Bacteroidales</taxon>
        <taxon>Tannerellaceae</taxon>
        <taxon>Parabacteroides</taxon>
    </lineage>
</organism>
<proteinExistence type="inferred from homology"/>
<protein>
    <recommendedName>
        <fullName evidence="1">Small ribosomal subunit protein uS14</fullName>
    </recommendedName>
    <alternativeName>
        <fullName evidence="2">30S ribosomal protein S14</fullName>
    </alternativeName>
</protein>
<comment type="function">
    <text evidence="1">Binds 16S rRNA, required for the assembly of 30S particles and may also be responsible for determining the conformation of the 16S rRNA at the A site.</text>
</comment>
<comment type="subunit">
    <text evidence="1">Part of the 30S ribosomal subunit. Contacts proteins S3 and S10.</text>
</comment>
<comment type="similarity">
    <text evidence="1">Belongs to the universal ribosomal protein uS14 family.</text>
</comment>
<dbReference type="EMBL" id="CP000140">
    <property type="protein sequence ID" value="ABR44092.1"/>
    <property type="molecule type" value="Genomic_DNA"/>
</dbReference>
<dbReference type="RefSeq" id="WP_005853988.1">
    <property type="nucleotide sequence ID" value="NZ_LR215978.1"/>
</dbReference>
<dbReference type="SMR" id="A6LEH8"/>
<dbReference type="STRING" id="435591.BDI_2367"/>
<dbReference type="PaxDb" id="435591-BDI_2367"/>
<dbReference type="GeneID" id="93522360"/>
<dbReference type="KEGG" id="pdi:BDI_2367"/>
<dbReference type="eggNOG" id="COG0199">
    <property type="taxonomic scope" value="Bacteria"/>
</dbReference>
<dbReference type="HOGENOM" id="CLU_139869_0_0_10"/>
<dbReference type="BioCyc" id="PDIS435591:G1G5A-2432-MONOMER"/>
<dbReference type="Proteomes" id="UP000000566">
    <property type="component" value="Chromosome"/>
</dbReference>
<dbReference type="GO" id="GO:0005737">
    <property type="term" value="C:cytoplasm"/>
    <property type="evidence" value="ECO:0007669"/>
    <property type="project" value="UniProtKB-ARBA"/>
</dbReference>
<dbReference type="GO" id="GO:0015935">
    <property type="term" value="C:small ribosomal subunit"/>
    <property type="evidence" value="ECO:0007669"/>
    <property type="project" value="TreeGrafter"/>
</dbReference>
<dbReference type="GO" id="GO:0019843">
    <property type="term" value="F:rRNA binding"/>
    <property type="evidence" value="ECO:0007669"/>
    <property type="project" value="UniProtKB-UniRule"/>
</dbReference>
<dbReference type="GO" id="GO:0003735">
    <property type="term" value="F:structural constituent of ribosome"/>
    <property type="evidence" value="ECO:0007669"/>
    <property type="project" value="InterPro"/>
</dbReference>
<dbReference type="GO" id="GO:0006412">
    <property type="term" value="P:translation"/>
    <property type="evidence" value="ECO:0007669"/>
    <property type="project" value="UniProtKB-UniRule"/>
</dbReference>
<dbReference type="Gene3D" id="4.10.830.10">
    <property type="entry name" value="30s Ribosomal Protein S14, Chain N"/>
    <property type="match status" value="1"/>
</dbReference>
<dbReference type="HAMAP" id="MF_00537">
    <property type="entry name" value="Ribosomal_uS14_1"/>
    <property type="match status" value="1"/>
</dbReference>
<dbReference type="InterPro" id="IPR001209">
    <property type="entry name" value="Ribosomal_uS14"/>
</dbReference>
<dbReference type="InterPro" id="IPR023036">
    <property type="entry name" value="Ribosomal_uS14_bac/plastid"/>
</dbReference>
<dbReference type="InterPro" id="IPR018271">
    <property type="entry name" value="Ribosomal_uS14_CS"/>
</dbReference>
<dbReference type="InterPro" id="IPR043140">
    <property type="entry name" value="Ribosomal_uS14_sf"/>
</dbReference>
<dbReference type="NCBIfam" id="NF006477">
    <property type="entry name" value="PRK08881.1"/>
    <property type="match status" value="1"/>
</dbReference>
<dbReference type="PANTHER" id="PTHR19836">
    <property type="entry name" value="30S RIBOSOMAL PROTEIN S14"/>
    <property type="match status" value="1"/>
</dbReference>
<dbReference type="PANTHER" id="PTHR19836:SF19">
    <property type="entry name" value="SMALL RIBOSOMAL SUBUNIT PROTEIN US14M"/>
    <property type="match status" value="1"/>
</dbReference>
<dbReference type="Pfam" id="PF00253">
    <property type="entry name" value="Ribosomal_S14"/>
    <property type="match status" value="1"/>
</dbReference>
<dbReference type="SUPFAM" id="SSF57716">
    <property type="entry name" value="Glucocorticoid receptor-like (DNA-binding domain)"/>
    <property type="match status" value="1"/>
</dbReference>
<dbReference type="PROSITE" id="PS00527">
    <property type="entry name" value="RIBOSOMAL_S14"/>
    <property type="match status" value="1"/>
</dbReference>
<accession>A6LEH8</accession>
<reference key="1">
    <citation type="journal article" date="2007" name="PLoS Biol.">
        <title>Evolution of symbiotic bacteria in the distal human intestine.</title>
        <authorList>
            <person name="Xu J."/>
            <person name="Mahowald M.A."/>
            <person name="Ley R.E."/>
            <person name="Lozupone C.A."/>
            <person name="Hamady M."/>
            <person name="Martens E.C."/>
            <person name="Henrissat B."/>
            <person name="Coutinho P.M."/>
            <person name="Minx P."/>
            <person name="Latreille P."/>
            <person name="Cordum H."/>
            <person name="Van Brunt A."/>
            <person name="Kim K."/>
            <person name="Fulton R.S."/>
            <person name="Fulton L.A."/>
            <person name="Clifton S.W."/>
            <person name="Wilson R.K."/>
            <person name="Knight R.D."/>
            <person name="Gordon J.I."/>
        </authorList>
    </citation>
    <scope>NUCLEOTIDE SEQUENCE [LARGE SCALE GENOMIC DNA]</scope>
    <source>
        <strain>ATCC 8503 / DSM 20701 / CIP 104284 / JCM 5825 / NCTC 11152</strain>
    </source>
</reference>
<keyword id="KW-1185">Reference proteome</keyword>
<keyword id="KW-0687">Ribonucleoprotein</keyword>
<keyword id="KW-0689">Ribosomal protein</keyword>
<keyword id="KW-0694">RNA-binding</keyword>
<keyword id="KW-0699">rRNA-binding</keyword>